<keyword id="KW-0025">Alternative splicing</keyword>
<keyword id="KW-0328">Glycosyltransferase</keyword>
<keyword id="KW-0472">Membrane</keyword>
<keyword id="KW-1185">Reference proteome</keyword>
<keyword id="KW-0808">Transferase</keyword>
<keyword id="KW-0812">Transmembrane</keyword>
<keyword id="KW-1133">Transmembrane helix</keyword>
<name>Y8219_ORYSJ</name>
<organism>
    <name type="scientific">Oryza sativa subsp. japonica</name>
    <name type="common">Rice</name>
    <dbReference type="NCBI Taxonomy" id="39947"/>
    <lineage>
        <taxon>Eukaryota</taxon>
        <taxon>Viridiplantae</taxon>
        <taxon>Streptophyta</taxon>
        <taxon>Embryophyta</taxon>
        <taxon>Tracheophyta</taxon>
        <taxon>Spermatophyta</taxon>
        <taxon>Magnoliopsida</taxon>
        <taxon>Liliopsida</taxon>
        <taxon>Poales</taxon>
        <taxon>Poaceae</taxon>
        <taxon>BOP clade</taxon>
        <taxon>Oryzoideae</taxon>
        <taxon>Oryzeae</taxon>
        <taxon>Oryzinae</taxon>
        <taxon>Oryza</taxon>
        <taxon>Oryza sativa</taxon>
    </lineage>
</organism>
<proteinExistence type="evidence at transcript level"/>
<reference key="1">
    <citation type="journal article" date="2005" name="Nature">
        <title>The map-based sequence of the rice genome.</title>
        <authorList>
            <consortium name="International rice genome sequencing project (IRGSP)"/>
        </authorList>
    </citation>
    <scope>NUCLEOTIDE SEQUENCE [LARGE SCALE GENOMIC DNA]</scope>
    <source>
        <strain>cv. Nipponbare</strain>
    </source>
</reference>
<reference key="2">
    <citation type="journal article" date="2008" name="Nucleic Acids Res.">
        <title>The rice annotation project database (RAP-DB): 2008 update.</title>
        <authorList>
            <consortium name="The rice annotation project (RAP)"/>
        </authorList>
    </citation>
    <scope>GENOME REANNOTATION</scope>
    <source>
        <strain>cv. Nipponbare</strain>
    </source>
</reference>
<reference key="3">
    <citation type="journal article" date="2013" name="Rice">
        <title>Improvement of the Oryza sativa Nipponbare reference genome using next generation sequence and optical map data.</title>
        <authorList>
            <person name="Kawahara Y."/>
            <person name="de la Bastide M."/>
            <person name="Hamilton J.P."/>
            <person name="Kanamori H."/>
            <person name="McCombie W.R."/>
            <person name="Ouyang S."/>
            <person name="Schwartz D.C."/>
            <person name="Tanaka T."/>
            <person name="Wu J."/>
            <person name="Zhou S."/>
            <person name="Childs K.L."/>
            <person name="Davidson R.M."/>
            <person name="Lin H."/>
            <person name="Quesada-Ocampo L."/>
            <person name="Vaillancourt B."/>
            <person name="Sakai H."/>
            <person name="Lee S.S."/>
            <person name="Kim J."/>
            <person name="Numa H."/>
            <person name="Itoh T."/>
            <person name="Buell C.R."/>
            <person name="Matsumoto T."/>
        </authorList>
    </citation>
    <scope>GENOME REANNOTATION</scope>
    <source>
        <strain>cv. Nipponbare</strain>
    </source>
</reference>
<reference key="4">
    <citation type="journal article" date="2005" name="PLoS Biol.">
        <title>The genomes of Oryza sativa: a history of duplications.</title>
        <authorList>
            <person name="Yu J."/>
            <person name="Wang J."/>
            <person name="Lin W."/>
            <person name="Li S."/>
            <person name="Li H."/>
            <person name="Zhou J."/>
            <person name="Ni P."/>
            <person name="Dong W."/>
            <person name="Hu S."/>
            <person name="Zeng C."/>
            <person name="Zhang J."/>
            <person name="Zhang Y."/>
            <person name="Li R."/>
            <person name="Xu Z."/>
            <person name="Li S."/>
            <person name="Li X."/>
            <person name="Zheng H."/>
            <person name="Cong L."/>
            <person name="Lin L."/>
            <person name="Yin J."/>
            <person name="Geng J."/>
            <person name="Li G."/>
            <person name="Shi J."/>
            <person name="Liu J."/>
            <person name="Lv H."/>
            <person name="Li J."/>
            <person name="Wang J."/>
            <person name="Deng Y."/>
            <person name="Ran L."/>
            <person name="Shi X."/>
            <person name="Wang X."/>
            <person name="Wu Q."/>
            <person name="Li C."/>
            <person name="Ren X."/>
            <person name="Wang J."/>
            <person name="Wang X."/>
            <person name="Li D."/>
            <person name="Liu D."/>
            <person name="Zhang X."/>
            <person name="Ji Z."/>
            <person name="Zhao W."/>
            <person name="Sun Y."/>
            <person name="Zhang Z."/>
            <person name="Bao J."/>
            <person name="Han Y."/>
            <person name="Dong L."/>
            <person name="Ji J."/>
            <person name="Chen P."/>
            <person name="Wu S."/>
            <person name="Liu J."/>
            <person name="Xiao Y."/>
            <person name="Bu D."/>
            <person name="Tan J."/>
            <person name="Yang L."/>
            <person name="Ye C."/>
            <person name="Zhang J."/>
            <person name="Xu J."/>
            <person name="Zhou Y."/>
            <person name="Yu Y."/>
            <person name="Zhang B."/>
            <person name="Zhuang S."/>
            <person name="Wei H."/>
            <person name="Liu B."/>
            <person name="Lei M."/>
            <person name="Yu H."/>
            <person name="Li Y."/>
            <person name="Xu H."/>
            <person name="Wei S."/>
            <person name="He X."/>
            <person name="Fang L."/>
            <person name="Zhang Z."/>
            <person name="Zhang Y."/>
            <person name="Huang X."/>
            <person name="Su Z."/>
            <person name="Tong W."/>
            <person name="Li J."/>
            <person name="Tong Z."/>
            <person name="Li S."/>
            <person name="Ye J."/>
            <person name="Wang L."/>
            <person name="Fang L."/>
            <person name="Lei T."/>
            <person name="Chen C.-S."/>
            <person name="Chen H.-C."/>
            <person name="Xu Z."/>
            <person name="Li H."/>
            <person name="Huang H."/>
            <person name="Zhang F."/>
            <person name="Xu H."/>
            <person name="Li N."/>
            <person name="Zhao C."/>
            <person name="Li S."/>
            <person name="Dong L."/>
            <person name="Huang Y."/>
            <person name="Li L."/>
            <person name="Xi Y."/>
            <person name="Qi Q."/>
            <person name="Li W."/>
            <person name="Zhang B."/>
            <person name="Hu W."/>
            <person name="Zhang Y."/>
            <person name="Tian X."/>
            <person name="Jiao Y."/>
            <person name="Liang X."/>
            <person name="Jin J."/>
            <person name="Gao L."/>
            <person name="Zheng W."/>
            <person name="Hao B."/>
            <person name="Liu S.-M."/>
            <person name="Wang W."/>
            <person name="Yuan L."/>
            <person name="Cao M."/>
            <person name="McDermott J."/>
            <person name="Samudrala R."/>
            <person name="Wang J."/>
            <person name="Wong G.K.-S."/>
            <person name="Yang H."/>
        </authorList>
    </citation>
    <scope>NUCLEOTIDE SEQUENCE [LARGE SCALE GENOMIC DNA]</scope>
    <source>
        <strain>cv. Nipponbare</strain>
    </source>
</reference>
<reference key="5">
    <citation type="journal article" date="2003" name="Science">
        <title>Collection, mapping, and annotation of over 28,000 cDNA clones from japonica rice.</title>
        <authorList>
            <consortium name="The rice full-length cDNA consortium"/>
        </authorList>
    </citation>
    <scope>NUCLEOTIDE SEQUENCE [LARGE SCALE MRNA] (ISOFORMS 1 AND 2)</scope>
    <source>
        <strain>cv. Nipponbare</strain>
    </source>
</reference>
<comment type="subcellular location">
    <subcellularLocation>
        <location evidence="4">Membrane</location>
        <topology evidence="4">Single-pass membrane protein</topology>
    </subcellularLocation>
</comment>
<comment type="alternative products">
    <event type="alternative splicing"/>
    <isoform>
        <id>Q6YRM6-1</id>
        <name>1</name>
        <sequence type="displayed"/>
    </isoform>
    <isoform>
        <id>Q6YRM6-2</id>
        <name>2</name>
        <sequence type="described" ref="VSP_040704"/>
    </isoform>
</comment>
<comment type="similarity">
    <text evidence="4">Belongs to the glycosyltransferase 92 family.</text>
</comment>
<comment type="sequence caution" evidence="4">
    <conflict type="frameshift">
        <sequence resource="EMBL" id="AK101512"/>
    </conflict>
</comment>
<protein>
    <recommendedName>
        <fullName>Glycosyltransferase family 92 protein Os08g0121900</fullName>
        <ecNumber evidence="4">2.4.1.-</ecNumber>
    </recommendedName>
</protein>
<accession>Q6YRM6</accession>
<accession>A0A0P0XBH7</accession>
<accession>Q6YRM5</accession>
<evidence type="ECO:0000255" key="1"/>
<evidence type="ECO:0000256" key="2">
    <source>
        <dbReference type="SAM" id="MobiDB-lite"/>
    </source>
</evidence>
<evidence type="ECO:0000303" key="3">
    <source>
    </source>
</evidence>
<evidence type="ECO:0000305" key="4"/>
<dbReference type="EC" id="2.4.1.-" evidence="4"/>
<dbReference type="EMBL" id="AP005730">
    <property type="protein sequence ID" value="BAD10589.1"/>
    <property type="molecule type" value="Genomic_DNA"/>
</dbReference>
<dbReference type="EMBL" id="AP005730">
    <property type="protein sequence ID" value="BAD10590.1"/>
    <property type="molecule type" value="Genomic_DNA"/>
</dbReference>
<dbReference type="EMBL" id="AP006617">
    <property type="protein sequence ID" value="BAD10798.1"/>
    <property type="molecule type" value="Genomic_DNA"/>
</dbReference>
<dbReference type="EMBL" id="AP006617">
    <property type="protein sequence ID" value="BAD10799.1"/>
    <property type="molecule type" value="Genomic_DNA"/>
</dbReference>
<dbReference type="EMBL" id="AP006723">
    <property type="protein sequence ID" value="BAD10830.1"/>
    <property type="molecule type" value="Genomic_DNA"/>
</dbReference>
<dbReference type="EMBL" id="AP006723">
    <property type="protein sequence ID" value="BAD10831.1"/>
    <property type="molecule type" value="Genomic_DNA"/>
</dbReference>
<dbReference type="EMBL" id="AP008214">
    <property type="protein sequence ID" value="BAF22797.1"/>
    <property type="molecule type" value="Genomic_DNA"/>
</dbReference>
<dbReference type="EMBL" id="AP014964">
    <property type="protein sequence ID" value="BAT03607.1"/>
    <property type="molecule type" value="Genomic_DNA"/>
</dbReference>
<dbReference type="EMBL" id="CM000145">
    <property type="protein sequence ID" value="EEE67961.1"/>
    <property type="molecule type" value="Genomic_DNA"/>
</dbReference>
<dbReference type="EMBL" id="AK065395">
    <property type="status" value="NOT_ANNOTATED_CDS"/>
    <property type="molecule type" value="mRNA"/>
</dbReference>
<dbReference type="EMBL" id="AK101512">
    <property type="status" value="NOT_ANNOTATED_CDS"/>
    <property type="molecule type" value="mRNA"/>
</dbReference>
<dbReference type="RefSeq" id="XP_015651032.1">
    <property type="nucleotide sequence ID" value="XM_015795546.1"/>
</dbReference>
<dbReference type="SMR" id="Q6YRM6"/>
<dbReference type="FunCoup" id="Q6YRM6">
    <property type="interactions" value="692"/>
</dbReference>
<dbReference type="STRING" id="39947.Q6YRM6"/>
<dbReference type="PaxDb" id="39947-Q6YRM6"/>
<dbReference type="EnsemblPlants" id="Os08t0121900-01">
    <molecule id="Q6YRM6-1"/>
    <property type="protein sequence ID" value="Os08t0121900-01"/>
    <property type="gene ID" value="Os08g0121900"/>
</dbReference>
<dbReference type="Gramene" id="Os08t0121900-01">
    <molecule id="Q6YRM6-1"/>
    <property type="protein sequence ID" value="Os08t0121900-01"/>
    <property type="gene ID" value="Os08g0121900"/>
</dbReference>
<dbReference type="KEGG" id="dosa:Os08g0121900"/>
<dbReference type="eggNOG" id="KOG4159">
    <property type="taxonomic scope" value="Eukaryota"/>
</dbReference>
<dbReference type="InParanoid" id="Q6YRM6"/>
<dbReference type="OMA" id="MYHTRIG"/>
<dbReference type="OrthoDB" id="2526284at2759"/>
<dbReference type="Proteomes" id="UP000000763">
    <property type="component" value="Chromosome 8"/>
</dbReference>
<dbReference type="Proteomes" id="UP000007752">
    <property type="component" value="Chromosome 8"/>
</dbReference>
<dbReference type="Proteomes" id="UP000059680">
    <property type="component" value="Chromosome 8"/>
</dbReference>
<dbReference type="ExpressionAtlas" id="Q6YRM6">
    <property type="expression patterns" value="baseline and differential"/>
</dbReference>
<dbReference type="GO" id="GO:0005737">
    <property type="term" value="C:cytoplasm"/>
    <property type="evidence" value="ECO:0000318"/>
    <property type="project" value="GO_Central"/>
</dbReference>
<dbReference type="GO" id="GO:0016020">
    <property type="term" value="C:membrane"/>
    <property type="evidence" value="ECO:0007669"/>
    <property type="project" value="UniProtKB-SubCell"/>
</dbReference>
<dbReference type="GO" id="GO:0016757">
    <property type="term" value="F:glycosyltransferase activity"/>
    <property type="evidence" value="ECO:0000318"/>
    <property type="project" value="GO_Central"/>
</dbReference>
<dbReference type="GO" id="GO:0070085">
    <property type="term" value="P:glycosylation"/>
    <property type="evidence" value="ECO:0000318"/>
    <property type="project" value="GO_Central"/>
</dbReference>
<dbReference type="InterPro" id="IPR008166">
    <property type="entry name" value="Glyco_transf_92"/>
</dbReference>
<dbReference type="PANTHER" id="PTHR21461">
    <property type="entry name" value="GLYCOSYLTRANSFERASE FAMILY 92 PROTEIN"/>
    <property type="match status" value="1"/>
</dbReference>
<dbReference type="PANTHER" id="PTHR21461:SF55">
    <property type="entry name" value="GLYCOSYLTRANSFERASE FAMILY 92 PROTEIN"/>
    <property type="match status" value="1"/>
</dbReference>
<dbReference type="Pfam" id="PF01697">
    <property type="entry name" value="Glyco_transf_92"/>
    <property type="match status" value="1"/>
</dbReference>
<sequence length="584" mass="64949">MALAAKERKLSRLGSKGSGGGGGGGSFGARGQRAPAGTQRRLFAAFFAFLFAGAVLFGAAHVIGASFRPVLKTAWPSATLNAVSSERGAQQAGMVSVDAVLPSVHIQHAVALPDHVLLMLRDGSLLPASGQFECLYSPVNSSQLRRQPLSVATLPDGPSLVHCPAGPSRVAVSLSLAQSVPVAPLQWDRLVYTALIDSKDNSTVVFAKGMNLRPGRLGVPSRYECVFGRDFSKPKLVVTSPVVSAAQEIFRCVTPVRIRRYLRMTTGGKNSVNNDDKPMLVSIRTKGRGSSTLPSIAQPEPLPRYNKHWRRKAHSMCVCTMLRNQARFLREWIIYHSRIGVQRWFIYDNNSDDGIEEVLNTMDSSRYNVTRYLWPWMKSQEAGFAHCALRARESCEWVGFIDIDEFLHFPGNQTLQDVLRNYSVKPRIGELRTACHSFGPSGRTKIPKKGVTTGYTCRLAAPERHKSIVRPDALNPSLINVVHHFHLKEGMKYVNIGQGMMLINHYKYQVWEVFKDKFSGRVATYVADWQDEENVGSRDRAPGLGTKPVEPEDWPRRFCEVYDNGLKDFVQKVFTDPHTGNLPW</sequence>
<feature type="chain" id="PRO_0000405580" description="Glycosyltransferase family 92 protein Os08g0121900">
    <location>
        <begin position="1"/>
        <end position="584"/>
    </location>
</feature>
<feature type="transmembrane region" description="Helical" evidence="1">
    <location>
        <begin position="43"/>
        <end position="63"/>
    </location>
</feature>
<feature type="domain" description="GT92">
    <location>
        <begin position="314"/>
        <end position="525"/>
    </location>
</feature>
<feature type="region of interest" description="Disordered" evidence="2">
    <location>
        <begin position="1"/>
        <end position="33"/>
    </location>
</feature>
<feature type="compositionally biased region" description="Basic and acidic residues" evidence="2">
    <location>
        <begin position="1"/>
        <end position="10"/>
    </location>
</feature>
<feature type="compositionally biased region" description="Gly residues" evidence="2">
    <location>
        <begin position="16"/>
        <end position="28"/>
    </location>
</feature>
<feature type="splice variant" id="VSP_040704" description="In isoform 2." evidence="3">
    <location>
        <begin position="1"/>
        <end position="93"/>
    </location>
</feature>
<gene>
    <name type="ordered locus">Os08g0121900</name>
    <name type="ordered locus">LOC_Os08g02850</name>
    <name type="ORF">B1203H11.32</name>
    <name type="ORF">OsJ_25865</name>
    <name type="ORF">OSJNBa0073J19.9</name>
    <name type="ORF">OSJNBa0091F23.17</name>
</gene>